<accession>Q3YVX4</accession>
<protein>
    <recommendedName>
        <fullName evidence="1">Protein-export protein SecB</fullName>
    </recommendedName>
</protein>
<feature type="chain" id="PRO_0000318264" description="Protein-export protein SecB">
    <location>
        <begin position="1"/>
        <end position="155"/>
    </location>
</feature>
<reference key="1">
    <citation type="journal article" date="2005" name="Nucleic Acids Res.">
        <title>Genome dynamics and diversity of Shigella species, the etiologic agents of bacillary dysentery.</title>
        <authorList>
            <person name="Yang F."/>
            <person name="Yang J."/>
            <person name="Zhang X."/>
            <person name="Chen L."/>
            <person name="Jiang Y."/>
            <person name="Yan Y."/>
            <person name="Tang X."/>
            <person name="Wang J."/>
            <person name="Xiong Z."/>
            <person name="Dong J."/>
            <person name="Xue Y."/>
            <person name="Zhu Y."/>
            <person name="Xu X."/>
            <person name="Sun L."/>
            <person name="Chen S."/>
            <person name="Nie H."/>
            <person name="Peng J."/>
            <person name="Xu J."/>
            <person name="Wang Y."/>
            <person name="Yuan Z."/>
            <person name="Wen Y."/>
            <person name="Yao Z."/>
            <person name="Shen Y."/>
            <person name="Qiang B."/>
            <person name="Hou Y."/>
            <person name="Yu J."/>
            <person name="Jin Q."/>
        </authorList>
    </citation>
    <scope>NUCLEOTIDE SEQUENCE [LARGE SCALE GENOMIC DNA]</scope>
    <source>
        <strain>Ss046</strain>
    </source>
</reference>
<gene>
    <name evidence="1" type="primary">secB</name>
    <name type="ordered locus">SSON_3796</name>
</gene>
<proteinExistence type="inferred from homology"/>
<evidence type="ECO:0000255" key="1">
    <source>
        <dbReference type="HAMAP-Rule" id="MF_00821"/>
    </source>
</evidence>
<dbReference type="EMBL" id="CP000038">
    <property type="protein sequence ID" value="AAZ90338.1"/>
    <property type="molecule type" value="Genomic_DNA"/>
</dbReference>
<dbReference type="RefSeq" id="WP_000003379.1">
    <property type="nucleotide sequence ID" value="NC_007384.1"/>
</dbReference>
<dbReference type="SMR" id="Q3YVX4"/>
<dbReference type="GeneID" id="93778323"/>
<dbReference type="KEGG" id="ssn:SSON_3796"/>
<dbReference type="HOGENOM" id="CLU_111574_1_0_6"/>
<dbReference type="Proteomes" id="UP000002529">
    <property type="component" value="Chromosome"/>
</dbReference>
<dbReference type="GO" id="GO:0005737">
    <property type="term" value="C:cytoplasm"/>
    <property type="evidence" value="ECO:0007669"/>
    <property type="project" value="UniProtKB-SubCell"/>
</dbReference>
<dbReference type="GO" id="GO:0051082">
    <property type="term" value="F:unfolded protein binding"/>
    <property type="evidence" value="ECO:0007669"/>
    <property type="project" value="InterPro"/>
</dbReference>
<dbReference type="GO" id="GO:0006457">
    <property type="term" value="P:protein folding"/>
    <property type="evidence" value="ECO:0007669"/>
    <property type="project" value="UniProtKB-UniRule"/>
</dbReference>
<dbReference type="GO" id="GO:0051262">
    <property type="term" value="P:protein tetramerization"/>
    <property type="evidence" value="ECO:0007669"/>
    <property type="project" value="InterPro"/>
</dbReference>
<dbReference type="GO" id="GO:0015031">
    <property type="term" value="P:protein transport"/>
    <property type="evidence" value="ECO:0007669"/>
    <property type="project" value="UniProtKB-UniRule"/>
</dbReference>
<dbReference type="CDD" id="cd00557">
    <property type="entry name" value="Translocase_SecB"/>
    <property type="match status" value="1"/>
</dbReference>
<dbReference type="FunFam" id="3.10.420.10:FF:000001">
    <property type="entry name" value="Protein-export chaperone SecB"/>
    <property type="match status" value="1"/>
</dbReference>
<dbReference type="Gene3D" id="3.10.420.10">
    <property type="entry name" value="SecB-like"/>
    <property type="match status" value="1"/>
</dbReference>
<dbReference type="HAMAP" id="MF_00821">
    <property type="entry name" value="SecB"/>
    <property type="match status" value="1"/>
</dbReference>
<dbReference type="InterPro" id="IPR003708">
    <property type="entry name" value="SecB"/>
</dbReference>
<dbReference type="InterPro" id="IPR035958">
    <property type="entry name" value="SecB-like_sf"/>
</dbReference>
<dbReference type="NCBIfam" id="NF004390">
    <property type="entry name" value="PRK05751.1-1"/>
    <property type="match status" value="1"/>
</dbReference>
<dbReference type="NCBIfam" id="NF004393">
    <property type="entry name" value="PRK05751.1-4"/>
    <property type="match status" value="1"/>
</dbReference>
<dbReference type="NCBIfam" id="TIGR00809">
    <property type="entry name" value="secB"/>
    <property type="match status" value="1"/>
</dbReference>
<dbReference type="PANTHER" id="PTHR36918">
    <property type="match status" value="1"/>
</dbReference>
<dbReference type="PANTHER" id="PTHR36918:SF1">
    <property type="entry name" value="PROTEIN-EXPORT PROTEIN SECB"/>
    <property type="match status" value="1"/>
</dbReference>
<dbReference type="Pfam" id="PF02556">
    <property type="entry name" value="SecB"/>
    <property type="match status" value="1"/>
</dbReference>
<dbReference type="PRINTS" id="PR01594">
    <property type="entry name" value="SECBCHAPRONE"/>
</dbReference>
<dbReference type="SUPFAM" id="SSF54611">
    <property type="entry name" value="SecB-like"/>
    <property type="match status" value="1"/>
</dbReference>
<comment type="function">
    <text evidence="1">One of the proteins required for the normal export of preproteins out of the cell cytoplasm. It is a molecular chaperone that binds to a subset of precursor proteins, maintaining them in a translocation-competent state. It also specifically binds to its receptor SecA.</text>
</comment>
<comment type="subunit">
    <text evidence="1">Homotetramer, a dimer of dimers. One homotetramer interacts with 1 SecA dimer.</text>
</comment>
<comment type="subcellular location">
    <subcellularLocation>
        <location evidence="1">Cytoplasm</location>
    </subcellularLocation>
</comment>
<comment type="similarity">
    <text evidence="1">Belongs to the SecB family.</text>
</comment>
<name>SECB_SHISS</name>
<organism>
    <name type="scientific">Shigella sonnei (strain Ss046)</name>
    <dbReference type="NCBI Taxonomy" id="300269"/>
    <lineage>
        <taxon>Bacteria</taxon>
        <taxon>Pseudomonadati</taxon>
        <taxon>Pseudomonadota</taxon>
        <taxon>Gammaproteobacteria</taxon>
        <taxon>Enterobacterales</taxon>
        <taxon>Enterobacteriaceae</taxon>
        <taxon>Shigella</taxon>
    </lineage>
</organism>
<keyword id="KW-0143">Chaperone</keyword>
<keyword id="KW-0963">Cytoplasm</keyword>
<keyword id="KW-0653">Protein transport</keyword>
<keyword id="KW-1185">Reference proteome</keyword>
<keyword id="KW-0811">Translocation</keyword>
<keyword id="KW-0813">Transport</keyword>
<sequence>MSEQNNTEMTFQIQRIYTKDISFEAPNAPHVFQKDWQPEVKLDLDTASSQLADDVYEVVLRVTVTASLGEETAFLCEVQQGGIFSIAGIEGTQMAHCLGAYCPNILFPYARECITSVVSRGTFPQLNLAPINFDALFMNYLQQQAGEGTEEHQDA</sequence>